<keyword id="KW-0472">Membrane</keyword>
<keyword id="KW-1185">Reference proteome</keyword>
<keyword id="KW-0812">Transmembrane</keyword>
<keyword id="KW-1133">Transmembrane helix</keyword>
<comment type="subcellular location">
    <subcellularLocation>
        <location evidence="3">Membrane</location>
        <topology evidence="3">Multi-pass membrane protein</topology>
    </subcellularLocation>
</comment>
<gene>
    <name type="ordered locus">MIMI_L817</name>
</gene>
<name>YL817_MIMIV</name>
<protein>
    <recommendedName>
        <fullName>Uncharacterized protein L817</fullName>
    </recommendedName>
</protein>
<accession>Q5UQG8</accession>
<reference key="1">
    <citation type="journal article" date="2004" name="Science">
        <title>The 1.2-megabase genome sequence of Mimivirus.</title>
        <authorList>
            <person name="Raoult D."/>
            <person name="Audic S."/>
            <person name="Robert C."/>
            <person name="Abergel C."/>
            <person name="Renesto P."/>
            <person name="Ogata H."/>
            <person name="La Scola B."/>
            <person name="Susan M."/>
            <person name="Claverie J.-M."/>
        </authorList>
    </citation>
    <scope>NUCLEOTIDE SEQUENCE [LARGE SCALE GENOMIC DNA]</scope>
    <source>
        <strain>Rowbotham-Bradford</strain>
    </source>
</reference>
<dbReference type="EMBL" id="AY653733">
    <property type="protein sequence ID" value="AAV51077.1"/>
    <property type="molecule type" value="Genomic_DNA"/>
</dbReference>
<dbReference type="KEGG" id="vg:9925480"/>
<dbReference type="Proteomes" id="UP000001134">
    <property type="component" value="Genome"/>
</dbReference>
<dbReference type="GO" id="GO:0016020">
    <property type="term" value="C:membrane"/>
    <property type="evidence" value="ECO:0007669"/>
    <property type="project" value="UniProtKB-SubCell"/>
</dbReference>
<organism>
    <name type="scientific">Acanthamoeba polyphaga mimivirus</name>
    <name type="common">APMV</name>
    <dbReference type="NCBI Taxonomy" id="212035"/>
    <lineage>
        <taxon>Viruses</taxon>
        <taxon>Varidnaviria</taxon>
        <taxon>Bamfordvirae</taxon>
        <taxon>Nucleocytoviricota</taxon>
        <taxon>Megaviricetes</taxon>
        <taxon>Imitervirales</taxon>
        <taxon>Mimiviridae</taxon>
        <taxon>Megamimivirinae</taxon>
        <taxon>Mimivirus</taxon>
        <taxon>Mimivirus bradfordmassiliense</taxon>
    </lineage>
</organism>
<feature type="chain" id="PRO_0000071366" description="Uncharacterized protein L817">
    <location>
        <begin position="1"/>
        <end position="142"/>
    </location>
</feature>
<feature type="transmembrane region" description="Helical" evidence="1">
    <location>
        <begin position="63"/>
        <end position="83"/>
    </location>
</feature>
<feature type="transmembrane region" description="Helical" evidence="1">
    <location>
        <begin position="109"/>
        <end position="129"/>
    </location>
</feature>
<feature type="region of interest" description="Disordered" evidence="2">
    <location>
        <begin position="1"/>
        <end position="22"/>
    </location>
</feature>
<evidence type="ECO:0000255" key="1"/>
<evidence type="ECO:0000256" key="2">
    <source>
        <dbReference type="SAM" id="MobiDB-lite"/>
    </source>
</evidence>
<evidence type="ECO:0000305" key="3"/>
<sequence length="142" mass="16245">MSGSVNQNTDQHSQDSSSTPNNKLTKTLASLDDSTLEFAVDVLSHLPLIRRSLNYAKNLLVRLFVMYMIVQVSYYIVPFVLLVLFGYNQSTPDMKFAIQLQVLVVSRGIIDGIIGVLQFIFWFWIFVDLIRFLFGYAKNKVN</sequence>
<proteinExistence type="predicted"/>
<organismHost>
    <name type="scientific">Acanthamoeba polyphaga</name>
    <name type="common">Amoeba</name>
    <dbReference type="NCBI Taxonomy" id="5757"/>
</organismHost>